<proteinExistence type="inferred from homology"/>
<comment type="function">
    <text evidence="1">Involved in protein export. Acts as a chaperone by maintaining the newly synthesized protein in an open conformation. Functions as a peptidyl-prolyl cis-trans isomerase.</text>
</comment>
<comment type="catalytic activity">
    <reaction evidence="1">
        <text>[protein]-peptidylproline (omega=180) = [protein]-peptidylproline (omega=0)</text>
        <dbReference type="Rhea" id="RHEA:16237"/>
        <dbReference type="Rhea" id="RHEA-COMP:10747"/>
        <dbReference type="Rhea" id="RHEA-COMP:10748"/>
        <dbReference type="ChEBI" id="CHEBI:83833"/>
        <dbReference type="ChEBI" id="CHEBI:83834"/>
        <dbReference type="EC" id="5.2.1.8"/>
    </reaction>
</comment>
<comment type="subcellular location">
    <subcellularLocation>
        <location>Cytoplasm</location>
    </subcellularLocation>
    <text evidence="1">About half TF is bound to the ribosome near the polypeptide exit tunnel while the other half is free in the cytoplasm.</text>
</comment>
<comment type="domain">
    <text evidence="1">Consists of 3 domains; the N-terminus binds the ribosome, the middle domain has PPIase activity, while the C-terminus has intrinsic chaperone activity on its own.</text>
</comment>
<comment type="similarity">
    <text evidence="1">Belongs to the FKBP-type PPIase family. Tig subfamily.</text>
</comment>
<feature type="chain" id="PRO_0000179360" description="Trigger factor">
    <location>
        <begin position="1"/>
        <end position="433"/>
    </location>
</feature>
<feature type="domain" description="PPIase FKBP-type" evidence="1">
    <location>
        <begin position="161"/>
        <end position="246"/>
    </location>
</feature>
<gene>
    <name evidence="1" type="primary">tig</name>
    <name type="ordered locus">HD_0663</name>
</gene>
<reference key="1">
    <citation type="submission" date="2003-06" db="EMBL/GenBank/DDBJ databases">
        <title>The complete genome sequence of Haemophilus ducreyi.</title>
        <authorList>
            <person name="Munson R.S. Jr."/>
            <person name="Ray W.C."/>
            <person name="Mahairas G."/>
            <person name="Sabo P."/>
            <person name="Mungur R."/>
            <person name="Johnson L."/>
            <person name="Nguyen D."/>
            <person name="Wang J."/>
            <person name="Forst C."/>
            <person name="Hood L."/>
        </authorList>
    </citation>
    <scope>NUCLEOTIDE SEQUENCE [LARGE SCALE GENOMIC DNA]</scope>
    <source>
        <strain>35000HP / ATCC 700724</strain>
    </source>
</reference>
<accession>Q7VN98</accession>
<evidence type="ECO:0000255" key="1">
    <source>
        <dbReference type="HAMAP-Rule" id="MF_00303"/>
    </source>
</evidence>
<keyword id="KW-0131">Cell cycle</keyword>
<keyword id="KW-0132">Cell division</keyword>
<keyword id="KW-0143">Chaperone</keyword>
<keyword id="KW-0963">Cytoplasm</keyword>
<keyword id="KW-0413">Isomerase</keyword>
<keyword id="KW-1185">Reference proteome</keyword>
<keyword id="KW-0697">Rotamase</keyword>
<sequence>MSISIETLEGLQRRVTLTVNANKIEAAYKEQLKDYAKNAHVDGFRKGKVPRSIIEQRFGLAARQEVLSEEMQRTFFDAVISEKINLAGRPTFTPNNYQLGQDFSFTATFEVFPEVELKGLENIEVEKPVVEITTADIDKMIEVLRKQQATWAESDAAATANDRVIIDFVGYIDGAEFEGGKATEFTLNMGQGSMIPGFEEGIVGHKAGEQFDIDVTFPEEYHAENLKGKAAKFAITLNKVENMILPELTEEFVKKFGTAKTVEELRAEIEKNMQRELKNAVTARIKNQVINGLVTQNDIEVPVAAIAEEIEVLRRQAVQRFGGKPEMAAQLPSELFEADAKRRVQVGLLLSTVIASNEIKVDEQRVQQTIADIASAYEQPAEVIAHYAKNQRLTDNIRNVVLEEQAVEIVLEKAKVTEKTHSFDEIMAQQAQG</sequence>
<protein>
    <recommendedName>
        <fullName evidence="1">Trigger factor</fullName>
        <shortName evidence="1">TF</shortName>
        <ecNumber evidence="1">5.2.1.8</ecNumber>
    </recommendedName>
    <alternativeName>
        <fullName evidence="1">PPIase</fullName>
    </alternativeName>
</protein>
<organism>
    <name type="scientific">Haemophilus ducreyi (strain 35000HP / ATCC 700724)</name>
    <dbReference type="NCBI Taxonomy" id="233412"/>
    <lineage>
        <taxon>Bacteria</taxon>
        <taxon>Pseudomonadati</taxon>
        <taxon>Pseudomonadota</taxon>
        <taxon>Gammaproteobacteria</taxon>
        <taxon>Pasteurellales</taxon>
        <taxon>Pasteurellaceae</taxon>
        <taxon>Haemophilus</taxon>
    </lineage>
</organism>
<name>TIG_HAEDU</name>
<dbReference type="EC" id="5.2.1.8" evidence="1"/>
<dbReference type="EMBL" id="AE017143">
    <property type="protein sequence ID" value="AAP95588.1"/>
    <property type="molecule type" value="Genomic_DNA"/>
</dbReference>
<dbReference type="RefSeq" id="WP_010944640.1">
    <property type="nucleotide sequence ID" value="NC_002940.2"/>
</dbReference>
<dbReference type="SMR" id="Q7VN98"/>
<dbReference type="STRING" id="233412.HD_0663"/>
<dbReference type="KEGG" id="hdu:HD_0663"/>
<dbReference type="eggNOG" id="COG0544">
    <property type="taxonomic scope" value="Bacteria"/>
</dbReference>
<dbReference type="HOGENOM" id="CLU_033058_2_0_6"/>
<dbReference type="OrthoDB" id="9767721at2"/>
<dbReference type="Proteomes" id="UP000001022">
    <property type="component" value="Chromosome"/>
</dbReference>
<dbReference type="GO" id="GO:0005737">
    <property type="term" value="C:cytoplasm"/>
    <property type="evidence" value="ECO:0007669"/>
    <property type="project" value="UniProtKB-SubCell"/>
</dbReference>
<dbReference type="GO" id="GO:0003755">
    <property type="term" value="F:peptidyl-prolyl cis-trans isomerase activity"/>
    <property type="evidence" value="ECO:0007669"/>
    <property type="project" value="UniProtKB-UniRule"/>
</dbReference>
<dbReference type="GO" id="GO:0044183">
    <property type="term" value="F:protein folding chaperone"/>
    <property type="evidence" value="ECO:0007669"/>
    <property type="project" value="TreeGrafter"/>
</dbReference>
<dbReference type="GO" id="GO:0043022">
    <property type="term" value="F:ribosome binding"/>
    <property type="evidence" value="ECO:0007669"/>
    <property type="project" value="TreeGrafter"/>
</dbReference>
<dbReference type="GO" id="GO:0051083">
    <property type="term" value="P:'de novo' cotranslational protein folding"/>
    <property type="evidence" value="ECO:0007669"/>
    <property type="project" value="TreeGrafter"/>
</dbReference>
<dbReference type="GO" id="GO:0051301">
    <property type="term" value="P:cell division"/>
    <property type="evidence" value="ECO:0007669"/>
    <property type="project" value="UniProtKB-KW"/>
</dbReference>
<dbReference type="GO" id="GO:0061077">
    <property type="term" value="P:chaperone-mediated protein folding"/>
    <property type="evidence" value="ECO:0007669"/>
    <property type="project" value="TreeGrafter"/>
</dbReference>
<dbReference type="GO" id="GO:0015031">
    <property type="term" value="P:protein transport"/>
    <property type="evidence" value="ECO:0007669"/>
    <property type="project" value="UniProtKB-UniRule"/>
</dbReference>
<dbReference type="GO" id="GO:0043335">
    <property type="term" value="P:protein unfolding"/>
    <property type="evidence" value="ECO:0007669"/>
    <property type="project" value="TreeGrafter"/>
</dbReference>
<dbReference type="FunFam" id="3.10.50.40:FF:000001">
    <property type="entry name" value="Trigger factor"/>
    <property type="match status" value="1"/>
</dbReference>
<dbReference type="Gene3D" id="3.10.50.40">
    <property type="match status" value="1"/>
</dbReference>
<dbReference type="Gene3D" id="3.30.70.1050">
    <property type="entry name" value="Trigger factor ribosome-binding domain"/>
    <property type="match status" value="1"/>
</dbReference>
<dbReference type="Gene3D" id="1.10.3120.10">
    <property type="entry name" value="Trigger factor, C-terminal domain"/>
    <property type="match status" value="1"/>
</dbReference>
<dbReference type="HAMAP" id="MF_00303">
    <property type="entry name" value="Trigger_factor_Tig"/>
    <property type="match status" value="1"/>
</dbReference>
<dbReference type="InterPro" id="IPR046357">
    <property type="entry name" value="PPIase_dom_sf"/>
</dbReference>
<dbReference type="InterPro" id="IPR001179">
    <property type="entry name" value="PPIase_FKBP_dom"/>
</dbReference>
<dbReference type="InterPro" id="IPR005215">
    <property type="entry name" value="Trig_fac"/>
</dbReference>
<dbReference type="InterPro" id="IPR008880">
    <property type="entry name" value="Trigger_fac_C"/>
</dbReference>
<dbReference type="InterPro" id="IPR037041">
    <property type="entry name" value="Trigger_fac_C_sf"/>
</dbReference>
<dbReference type="InterPro" id="IPR008881">
    <property type="entry name" value="Trigger_fac_ribosome-bd_bac"/>
</dbReference>
<dbReference type="InterPro" id="IPR036611">
    <property type="entry name" value="Trigger_fac_ribosome-bd_sf"/>
</dbReference>
<dbReference type="InterPro" id="IPR027304">
    <property type="entry name" value="Trigger_fact/SurA_dom_sf"/>
</dbReference>
<dbReference type="NCBIfam" id="TIGR00115">
    <property type="entry name" value="tig"/>
    <property type="match status" value="1"/>
</dbReference>
<dbReference type="PANTHER" id="PTHR30560">
    <property type="entry name" value="TRIGGER FACTOR CHAPERONE AND PEPTIDYL-PROLYL CIS/TRANS ISOMERASE"/>
    <property type="match status" value="1"/>
</dbReference>
<dbReference type="PANTHER" id="PTHR30560:SF3">
    <property type="entry name" value="TRIGGER FACTOR-LIKE PROTEIN TIG, CHLOROPLASTIC"/>
    <property type="match status" value="1"/>
</dbReference>
<dbReference type="Pfam" id="PF00254">
    <property type="entry name" value="FKBP_C"/>
    <property type="match status" value="1"/>
</dbReference>
<dbReference type="Pfam" id="PF05698">
    <property type="entry name" value="Trigger_C"/>
    <property type="match status" value="1"/>
</dbReference>
<dbReference type="Pfam" id="PF05697">
    <property type="entry name" value="Trigger_N"/>
    <property type="match status" value="1"/>
</dbReference>
<dbReference type="PIRSF" id="PIRSF003095">
    <property type="entry name" value="Trigger_factor"/>
    <property type="match status" value="1"/>
</dbReference>
<dbReference type="SUPFAM" id="SSF54534">
    <property type="entry name" value="FKBP-like"/>
    <property type="match status" value="1"/>
</dbReference>
<dbReference type="SUPFAM" id="SSF109998">
    <property type="entry name" value="Triger factor/SurA peptide-binding domain-like"/>
    <property type="match status" value="1"/>
</dbReference>
<dbReference type="SUPFAM" id="SSF102735">
    <property type="entry name" value="Trigger factor ribosome-binding domain"/>
    <property type="match status" value="1"/>
</dbReference>
<dbReference type="PROSITE" id="PS50059">
    <property type="entry name" value="FKBP_PPIASE"/>
    <property type="match status" value="1"/>
</dbReference>